<geneLocation type="mitochondrion"/>
<dbReference type="EMBL" id="U12386">
    <property type="protein sequence ID" value="AAD11828.1"/>
    <property type="molecule type" value="Genomic_DNA"/>
</dbReference>
<dbReference type="PIR" id="S53836">
    <property type="entry name" value="S53836"/>
</dbReference>
<dbReference type="RefSeq" id="NP_042535.1">
    <property type="nucleotide sequence ID" value="NC_001637.1"/>
</dbReference>
<dbReference type="SMR" id="P46753"/>
<dbReference type="GeneID" id="1734030"/>
<dbReference type="GO" id="GO:0005763">
    <property type="term" value="C:mitochondrial small ribosomal subunit"/>
    <property type="evidence" value="ECO:0007669"/>
    <property type="project" value="TreeGrafter"/>
</dbReference>
<dbReference type="GO" id="GO:0003735">
    <property type="term" value="F:structural constituent of ribosome"/>
    <property type="evidence" value="ECO:0007669"/>
    <property type="project" value="InterPro"/>
</dbReference>
<dbReference type="GO" id="GO:0006412">
    <property type="term" value="P:translation"/>
    <property type="evidence" value="ECO:0007669"/>
    <property type="project" value="InterPro"/>
</dbReference>
<dbReference type="CDD" id="cd01425">
    <property type="entry name" value="RPS2"/>
    <property type="match status" value="1"/>
</dbReference>
<dbReference type="Gene3D" id="3.40.50.10490">
    <property type="entry name" value="Glucose-6-phosphate isomerase like protein, domain 1"/>
    <property type="match status" value="1"/>
</dbReference>
<dbReference type="InterPro" id="IPR001865">
    <property type="entry name" value="Ribosomal_uS2"/>
</dbReference>
<dbReference type="InterPro" id="IPR005706">
    <property type="entry name" value="Ribosomal_uS2_bac/mit/plastid"/>
</dbReference>
<dbReference type="InterPro" id="IPR018130">
    <property type="entry name" value="Ribosomal_uS2_CS"/>
</dbReference>
<dbReference type="InterPro" id="IPR023591">
    <property type="entry name" value="Ribosomal_uS2_flav_dom_sf"/>
</dbReference>
<dbReference type="PANTHER" id="PTHR12534">
    <property type="entry name" value="30S RIBOSOMAL PROTEIN S2 PROKARYOTIC AND ORGANELLAR"/>
    <property type="match status" value="1"/>
</dbReference>
<dbReference type="PANTHER" id="PTHR12534:SF0">
    <property type="entry name" value="SMALL RIBOSOMAL SUBUNIT PROTEIN US2M"/>
    <property type="match status" value="1"/>
</dbReference>
<dbReference type="Pfam" id="PF00318">
    <property type="entry name" value="Ribosomal_S2"/>
    <property type="match status" value="2"/>
</dbReference>
<dbReference type="PRINTS" id="PR00395">
    <property type="entry name" value="RIBOSOMALS2"/>
</dbReference>
<dbReference type="SUPFAM" id="SSF52313">
    <property type="entry name" value="Ribosomal protein S2"/>
    <property type="match status" value="1"/>
</dbReference>
<dbReference type="PROSITE" id="PS00963">
    <property type="entry name" value="RIBOSOMAL_S2_2"/>
    <property type="match status" value="1"/>
</dbReference>
<feature type="chain" id="PRO_0000134341" description="Small ribosomal subunit protein uS2m">
    <location>
        <begin position="1"/>
        <end position="312"/>
    </location>
</feature>
<protein>
    <recommendedName>
        <fullName evidence="1">Small ribosomal subunit protein uS2m</fullName>
    </recommendedName>
    <alternativeName>
        <fullName>Ribosomal protein S2, mitochondrial</fullName>
    </alternativeName>
</protein>
<keyword id="KW-0496">Mitochondrion</keyword>
<keyword id="KW-0687">Ribonucleoprotein</keyword>
<keyword id="KW-0689">Ribosomal protein</keyword>
<sequence>MFNRIHITVNQLVASDLFLGYHIANWNPRTNFFLIGKYKNTNIFNLNYTYFLAKKFIVFLSELFVNKGHLWLVNENFSLFNRSSELYQLYSLFPEITFLNSKWCKGMLSNYKYVSIVKPAKFPHSIFVPNIQNNHYVINESFIINIPSIAIVDSIDNPSNVFFPIPGNSKSLKSLFFFYMVIAKSLFYSRYITSSKFIFNSINRLNGLNSKLYRNLFVRDYFAFFKKRFLLENIIFLFKSGFFSKKKFNFLFRPKMHITSKTLLFKWKMPLLILSSVFKNVLHWDIFNKIVLKKRLVVKNLQFFKTLMFVLI</sequence>
<comment type="subcellular location">
    <subcellularLocation>
        <location>Mitochondrion</location>
    </subcellularLocation>
</comment>
<comment type="similarity">
    <text evidence="1">Belongs to the universal ribosomal protein uS2 family.</text>
</comment>
<organism>
    <name type="scientific">Acanthamoeba castellanii</name>
    <name type="common">Amoeba</name>
    <dbReference type="NCBI Taxonomy" id="5755"/>
    <lineage>
        <taxon>Eukaryota</taxon>
        <taxon>Amoebozoa</taxon>
        <taxon>Discosea</taxon>
        <taxon>Longamoebia</taxon>
        <taxon>Centramoebida</taxon>
        <taxon>Acanthamoebidae</taxon>
        <taxon>Acanthamoeba</taxon>
    </lineage>
</organism>
<evidence type="ECO:0000305" key="1"/>
<accession>P46753</accession>
<reference key="1">
    <citation type="journal article" date="1995" name="J. Mol. Biol.">
        <title>The mitochondrial DNA of the amoeboid protozoon, Acanthamoeba castellanii: complete sequence, gene content and genome organization.</title>
        <authorList>
            <person name="Burger G."/>
            <person name="Plante I."/>
            <person name="Lonergan K.M."/>
            <person name="Gray M.W."/>
        </authorList>
    </citation>
    <scope>NUCLEOTIDE SEQUENCE [GENOMIC DNA]</scope>
    <source>
        <strain>ATCC 30010 / Neff</strain>
    </source>
</reference>
<gene>
    <name type="primary">RPS2</name>
</gene>
<proteinExistence type="inferred from homology"/>
<name>RT02_ACACA</name>